<evidence type="ECO:0000255" key="1">
    <source>
        <dbReference type="HAMAP-Rule" id="MF_00278"/>
    </source>
</evidence>
<protein>
    <recommendedName>
        <fullName evidence="1">Imidazole glycerol phosphate synthase subunit HisH</fullName>
        <ecNumber evidence="1">4.3.2.10</ecNumber>
    </recommendedName>
    <alternativeName>
        <fullName evidence="1">IGP synthase glutaminase subunit</fullName>
        <ecNumber evidence="1">3.5.1.2</ecNumber>
    </alternativeName>
    <alternativeName>
        <fullName evidence="1">IGP synthase subunit HisH</fullName>
    </alternativeName>
    <alternativeName>
        <fullName evidence="1">ImGP synthase subunit HisH</fullName>
        <shortName evidence="1">IGPS subunit HisH</shortName>
    </alternativeName>
</protein>
<reference key="1">
    <citation type="journal article" date="2008" name="Appl. Environ. Microbiol.">
        <title>Genome of the epsilonproteobacterial chemolithoautotroph Sulfurimonas denitrificans.</title>
        <authorList>
            <person name="Sievert S.M."/>
            <person name="Scott K.M."/>
            <person name="Klotz M.G."/>
            <person name="Chain P.S.G."/>
            <person name="Hauser L.J."/>
            <person name="Hemp J."/>
            <person name="Huegler M."/>
            <person name="Land M."/>
            <person name="Lapidus A."/>
            <person name="Larimer F.W."/>
            <person name="Lucas S."/>
            <person name="Malfatti S.A."/>
            <person name="Meyer F."/>
            <person name="Paulsen I.T."/>
            <person name="Ren Q."/>
            <person name="Simon J."/>
            <person name="Bailey K."/>
            <person name="Diaz E."/>
            <person name="Fitzpatrick K.A."/>
            <person name="Glover B."/>
            <person name="Gwatney N."/>
            <person name="Korajkic A."/>
            <person name="Long A."/>
            <person name="Mobberley J.M."/>
            <person name="Pantry S.N."/>
            <person name="Pazder G."/>
            <person name="Peterson S."/>
            <person name="Quintanilla J.D."/>
            <person name="Sprinkle R."/>
            <person name="Stephens J."/>
            <person name="Thomas P."/>
            <person name="Vaughn R."/>
            <person name="Weber M.J."/>
            <person name="Wooten L.L."/>
        </authorList>
    </citation>
    <scope>NUCLEOTIDE SEQUENCE [LARGE SCALE GENOMIC DNA]</scope>
    <source>
        <strain>ATCC 33889 / DSM 1251</strain>
    </source>
</reference>
<organism>
    <name type="scientific">Sulfurimonas denitrificans (strain ATCC 33889 / DSM 1251)</name>
    <name type="common">Thiomicrospira denitrificans (strain ATCC 33889 / DSM 1251)</name>
    <dbReference type="NCBI Taxonomy" id="326298"/>
    <lineage>
        <taxon>Bacteria</taxon>
        <taxon>Pseudomonadati</taxon>
        <taxon>Campylobacterota</taxon>
        <taxon>Epsilonproteobacteria</taxon>
        <taxon>Campylobacterales</taxon>
        <taxon>Sulfurimonadaceae</taxon>
        <taxon>Sulfurimonas</taxon>
    </lineage>
</organism>
<proteinExistence type="inferred from homology"/>
<comment type="function">
    <text evidence="1">IGPS catalyzes the conversion of PRFAR and glutamine to IGP, AICAR and glutamate. The HisH subunit catalyzes the hydrolysis of glutamine to glutamate and ammonia as part of the synthesis of IGP and AICAR. The resulting ammonia molecule is channeled to the active site of HisF.</text>
</comment>
<comment type="catalytic activity">
    <reaction evidence="1">
        <text>5-[(5-phospho-1-deoxy-D-ribulos-1-ylimino)methylamino]-1-(5-phospho-beta-D-ribosyl)imidazole-4-carboxamide + L-glutamine = D-erythro-1-(imidazol-4-yl)glycerol 3-phosphate + 5-amino-1-(5-phospho-beta-D-ribosyl)imidazole-4-carboxamide + L-glutamate + H(+)</text>
        <dbReference type="Rhea" id="RHEA:24793"/>
        <dbReference type="ChEBI" id="CHEBI:15378"/>
        <dbReference type="ChEBI" id="CHEBI:29985"/>
        <dbReference type="ChEBI" id="CHEBI:58278"/>
        <dbReference type="ChEBI" id="CHEBI:58359"/>
        <dbReference type="ChEBI" id="CHEBI:58475"/>
        <dbReference type="ChEBI" id="CHEBI:58525"/>
        <dbReference type="EC" id="4.3.2.10"/>
    </reaction>
</comment>
<comment type="catalytic activity">
    <reaction evidence="1">
        <text>L-glutamine + H2O = L-glutamate + NH4(+)</text>
        <dbReference type="Rhea" id="RHEA:15889"/>
        <dbReference type="ChEBI" id="CHEBI:15377"/>
        <dbReference type="ChEBI" id="CHEBI:28938"/>
        <dbReference type="ChEBI" id="CHEBI:29985"/>
        <dbReference type="ChEBI" id="CHEBI:58359"/>
        <dbReference type="EC" id="3.5.1.2"/>
    </reaction>
</comment>
<comment type="pathway">
    <text evidence="1">Amino-acid biosynthesis; L-histidine biosynthesis; L-histidine from 5-phospho-alpha-D-ribose 1-diphosphate: step 5/9.</text>
</comment>
<comment type="subunit">
    <text evidence="1">Heterodimer of HisH and HisF.</text>
</comment>
<comment type="subcellular location">
    <subcellularLocation>
        <location evidence="1">Cytoplasm</location>
    </subcellularLocation>
</comment>
<feature type="chain" id="PRO_0000231768" description="Imidazole glycerol phosphate synthase subunit HisH">
    <location>
        <begin position="1"/>
        <end position="207"/>
    </location>
</feature>
<feature type="domain" description="Glutamine amidotransferase type-1" evidence="1">
    <location>
        <begin position="1"/>
        <end position="207"/>
    </location>
</feature>
<feature type="active site" description="Nucleophile" evidence="1">
    <location>
        <position position="79"/>
    </location>
</feature>
<feature type="active site" evidence="1">
    <location>
        <position position="185"/>
    </location>
</feature>
<feature type="active site" evidence="1">
    <location>
        <position position="187"/>
    </location>
</feature>
<sequence length="207" mass="23455">MIAIVDYNMGNLASVQNAFAKIGTQTVIEGDPKKFKEYDKLILPGVGAFGDAMEHLRERGMIEAIKEFAASTKPILGICLGMQLLFESSEEFGEHEGLGLIKGKVVAFDTSKFEETLKVPHMGWNRMFTKEHPLFEGLDEEHYLYFVHSYHALCDDEKDSIGRTFYGYEFTSAVAHDNIMGIQPHPEKSHDNGLKILENFTKYRNLK</sequence>
<gene>
    <name evidence="1" type="primary">hisH</name>
    <name type="ordered locus">Suden_1674</name>
</gene>
<name>HIS5_SULDN</name>
<keyword id="KW-0028">Amino-acid biosynthesis</keyword>
<keyword id="KW-0963">Cytoplasm</keyword>
<keyword id="KW-0315">Glutamine amidotransferase</keyword>
<keyword id="KW-0368">Histidine biosynthesis</keyword>
<keyword id="KW-0378">Hydrolase</keyword>
<keyword id="KW-0456">Lyase</keyword>
<keyword id="KW-1185">Reference proteome</keyword>
<accession>Q30PY0</accession>
<dbReference type="EC" id="4.3.2.10" evidence="1"/>
<dbReference type="EC" id="3.5.1.2" evidence="1"/>
<dbReference type="EMBL" id="CP000153">
    <property type="protein sequence ID" value="ABB44951.1"/>
    <property type="molecule type" value="Genomic_DNA"/>
</dbReference>
<dbReference type="RefSeq" id="WP_011373292.1">
    <property type="nucleotide sequence ID" value="NC_007575.1"/>
</dbReference>
<dbReference type="SMR" id="Q30PY0"/>
<dbReference type="STRING" id="326298.Suden_1674"/>
<dbReference type="KEGG" id="tdn:Suden_1674"/>
<dbReference type="eggNOG" id="COG0118">
    <property type="taxonomic scope" value="Bacteria"/>
</dbReference>
<dbReference type="HOGENOM" id="CLU_071837_2_0_7"/>
<dbReference type="OrthoDB" id="9807749at2"/>
<dbReference type="UniPathway" id="UPA00031">
    <property type="reaction ID" value="UER00010"/>
</dbReference>
<dbReference type="Proteomes" id="UP000002714">
    <property type="component" value="Chromosome"/>
</dbReference>
<dbReference type="GO" id="GO:0005737">
    <property type="term" value="C:cytoplasm"/>
    <property type="evidence" value="ECO:0007669"/>
    <property type="project" value="UniProtKB-SubCell"/>
</dbReference>
<dbReference type="GO" id="GO:0004359">
    <property type="term" value="F:glutaminase activity"/>
    <property type="evidence" value="ECO:0007669"/>
    <property type="project" value="UniProtKB-EC"/>
</dbReference>
<dbReference type="GO" id="GO:0000107">
    <property type="term" value="F:imidazoleglycerol-phosphate synthase activity"/>
    <property type="evidence" value="ECO:0007669"/>
    <property type="project" value="UniProtKB-UniRule"/>
</dbReference>
<dbReference type="GO" id="GO:0016829">
    <property type="term" value="F:lyase activity"/>
    <property type="evidence" value="ECO:0007669"/>
    <property type="project" value="UniProtKB-KW"/>
</dbReference>
<dbReference type="GO" id="GO:0000105">
    <property type="term" value="P:L-histidine biosynthetic process"/>
    <property type="evidence" value="ECO:0007669"/>
    <property type="project" value="UniProtKB-UniRule"/>
</dbReference>
<dbReference type="CDD" id="cd01748">
    <property type="entry name" value="GATase1_IGP_Synthase"/>
    <property type="match status" value="1"/>
</dbReference>
<dbReference type="FunFam" id="3.40.50.880:FF:000009">
    <property type="entry name" value="Imidazole glycerol phosphate synthase subunit HisH"/>
    <property type="match status" value="1"/>
</dbReference>
<dbReference type="Gene3D" id="3.40.50.880">
    <property type="match status" value="1"/>
</dbReference>
<dbReference type="HAMAP" id="MF_00278">
    <property type="entry name" value="HisH"/>
    <property type="match status" value="1"/>
</dbReference>
<dbReference type="InterPro" id="IPR029062">
    <property type="entry name" value="Class_I_gatase-like"/>
</dbReference>
<dbReference type="InterPro" id="IPR017926">
    <property type="entry name" value="GATASE"/>
</dbReference>
<dbReference type="InterPro" id="IPR010139">
    <property type="entry name" value="Imidazole-glycPsynth_HisH"/>
</dbReference>
<dbReference type="NCBIfam" id="TIGR01855">
    <property type="entry name" value="IMP_synth_hisH"/>
    <property type="match status" value="1"/>
</dbReference>
<dbReference type="PANTHER" id="PTHR42701">
    <property type="entry name" value="IMIDAZOLE GLYCEROL PHOSPHATE SYNTHASE SUBUNIT HISH"/>
    <property type="match status" value="1"/>
</dbReference>
<dbReference type="PANTHER" id="PTHR42701:SF1">
    <property type="entry name" value="IMIDAZOLE GLYCEROL PHOSPHATE SYNTHASE SUBUNIT HISH"/>
    <property type="match status" value="1"/>
</dbReference>
<dbReference type="Pfam" id="PF00117">
    <property type="entry name" value="GATase"/>
    <property type="match status" value="1"/>
</dbReference>
<dbReference type="PIRSF" id="PIRSF000495">
    <property type="entry name" value="Amidotransf_hisH"/>
    <property type="match status" value="1"/>
</dbReference>
<dbReference type="SUPFAM" id="SSF52317">
    <property type="entry name" value="Class I glutamine amidotransferase-like"/>
    <property type="match status" value="1"/>
</dbReference>
<dbReference type="PROSITE" id="PS51273">
    <property type="entry name" value="GATASE_TYPE_1"/>
    <property type="match status" value="1"/>
</dbReference>